<keyword id="KW-0297">G-protein coupled receptor</keyword>
<keyword id="KW-0325">Glycoprotein</keyword>
<keyword id="KW-0472">Membrane</keyword>
<keyword id="KW-0675">Receptor</keyword>
<keyword id="KW-1185">Reference proteome</keyword>
<keyword id="KW-0807">Transducer</keyword>
<keyword id="KW-0812">Transmembrane</keyword>
<keyword id="KW-1133">Transmembrane helix</keyword>
<organism>
    <name type="scientific">Dictyostelium discoideum</name>
    <name type="common">Social amoeba</name>
    <dbReference type="NCBI Taxonomy" id="44689"/>
    <lineage>
        <taxon>Eukaryota</taxon>
        <taxon>Amoebozoa</taxon>
        <taxon>Evosea</taxon>
        <taxon>Eumycetozoa</taxon>
        <taxon>Dictyostelia</taxon>
        <taxon>Dictyosteliales</taxon>
        <taxon>Dictyosteliaceae</taxon>
        <taxon>Dictyostelium</taxon>
    </lineage>
</organism>
<feature type="chain" id="PRO_0000370360" description="Metabotropic glutamate receptor-like protein Q">
    <location>
        <begin position="1"/>
        <end position="1187"/>
    </location>
</feature>
<feature type="topological domain" description="Extracellular" evidence="1">
    <location>
        <begin position="1"/>
        <end position="735"/>
    </location>
</feature>
<feature type="transmembrane region" description="Helical; Name=1" evidence="1">
    <location>
        <begin position="736"/>
        <end position="756"/>
    </location>
</feature>
<feature type="topological domain" description="Cytoplasmic" evidence="1">
    <location>
        <begin position="757"/>
        <end position="768"/>
    </location>
</feature>
<feature type="transmembrane region" description="Helical; Name=2" evidence="1">
    <location>
        <begin position="769"/>
        <end position="789"/>
    </location>
</feature>
<feature type="topological domain" description="Extracellular" evidence="1">
    <location>
        <begin position="790"/>
        <end position="796"/>
    </location>
</feature>
<feature type="transmembrane region" description="Helical; Name=3" evidence="1">
    <location>
        <begin position="797"/>
        <end position="817"/>
    </location>
</feature>
<feature type="topological domain" description="Cytoplasmic" evidence="1">
    <location>
        <begin position="818"/>
        <end position="843"/>
    </location>
</feature>
<feature type="transmembrane region" description="Helical; Name=4" evidence="1">
    <location>
        <begin position="844"/>
        <end position="864"/>
    </location>
</feature>
<feature type="topological domain" description="Extracellular" evidence="1">
    <location>
        <begin position="865"/>
        <end position="888"/>
    </location>
</feature>
<feature type="transmembrane region" description="Helical; Name=5" evidence="1">
    <location>
        <begin position="889"/>
        <end position="909"/>
    </location>
</feature>
<feature type="topological domain" description="Cytoplasmic" evidence="1">
    <location>
        <begin position="910"/>
        <end position="925"/>
    </location>
</feature>
<feature type="transmembrane region" description="Helical; Name=6" evidence="1">
    <location>
        <begin position="926"/>
        <end position="946"/>
    </location>
</feature>
<feature type="topological domain" description="Extracellular" evidence="1">
    <location>
        <begin position="947"/>
        <end position="955"/>
    </location>
</feature>
<feature type="transmembrane region" description="Helical; Name=7" evidence="1">
    <location>
        <begin position="956"/>
        <end position="976"/>
    </location>
</feature>
<feature type="topological domain" description="Cytoplasmic" evidence="1">
    <location>
        <begin position="977"/>
        <end position="1095"/>
    </location>
</feature>
<feature type="region of interest" description="Disordered" evidence="2">
    <location>
        <begin position="1074"/>
        <end position="1187"/>
    </location>
</feature>
<feature type="compositionally biased region" description="Polar residues" evidence="2">
    <location>
        <begin position="1074"/>
        <end position="1105"/>
    </location>
</feature>
<feature type="compositionally biased region" description="Basic residues" evidence="2">
    <location>
        <begin position="1114"/>
        <end position="1124"/>
    </location>
</feature>
<feature type="compositionally biased region" description="Low complexity" evidence="2">
    <location>
        <begin position="1125"/>
        <end position="1174"/>
    </location>
</feature>
<feature type="glycosylation site" description="N-linked (GlcNAc...) asparagine" evidence="1">
    <location>
        <position position="35"/>
    </location>
</feature>
<feature type="glycosylation site" description="N-linked (GlcNAc...) asparagine" evidence="1">
    <location>
        <position position="44"/>
    </location>
</feature>
<feature type="glycosylation site" description="N-linked (GlcNAc...) asparagine" evidence="1">
    <location>
        <position position="55"/>
    </location>
</feature>
<feature type="glycosylation site" description="N-linked (GlcNAc...) asparagine" evidence="1">
    <location>
        <position position="177"/>
    </location>
</feature>
<feature type="glycosylation site" description="N-linked (GlcNAc...) asparagine" evidence="1">
    <location>
        <position position="258"/>
    </location>
</feature>
<feature type="glycosylation site" description="N-linked (GlcNAc...) asparagine" evidence="1">
    <location>
        <position position="275"/>
    </location>
</feature>
<feature type="glycosylation site" description="N-linked (GlcNAc...) asparagine" evidence="1">
    <location>
        <position position="397"/>
    </location>
</feature>
<feature type="glycosylation site" description="N-linked (GlcNAc...) asparagine" evidence="1">
    <location>
        <position position="402"/>
    </location>
</feature>
<feature type="glycosylation site" description="N-linked (GlcNAc...) asparagine" evidence="1">
    <location>
        <position position="462"/>
    </location>
</feature>
<feature type="glycosylation site" description="N-linked (GlcNAc...) asparagine" evidence="1">
    <location>
        <position position="526"/>
    </location>
</feature>
<feature type="glycosylation site" description="N-linked (GlcNAc...) asparagine" evidence="1">
    <location>
        <position position="527"/>
    </location>
</feature>
<feature type="glycosylation site" description="N-linked (GlcNAc...) asparagine" evidence="1">
    <location>
        <position position="557"/>
    </location>
</feature>
<feature type="glycosylation site" description="N-linked (GlcNAc...) asparagine" evidence="1">
    <location>
        <position position="562"/>
    </location>
</feature>
<feature type="glycosylation site" description="N-linked (GlcNAc...) asparagine" evidence="1">
    <location>
        <position position="684"/>
    </location>
</feature>
<feature type="glycosylation site" description="N-linked (GlcNAc...) asparagine" evidence="1">
    <location>
        <position position="794"/>
    </location>
</feature>
<name>GRLQ_DICDI</name>
<proteinExistence type="evidence at transcript level"/>
<dbReference type="EMBL" id="AAFI02000104">
    <property type="status" value="NOT_ANNOTATED_CDS"/>
    <property type="molecule type" value="Genomic_DNA"/>
</dbReference>
<dbReference type="EMBL" id="AAFI02000103">
    <property type="status" value="NOT_ANNOTATED_CDS"/>
    <property type="molecule type" value="Genomic_DNA"/>
</dbReference>
<dbReference type="FunCoup" id="Q54K09">
    <property type="interactions" value="1"/>
</dbReference>
<dbReference type="STRING" id="44689.Q54K09"/>
<dbReference type="GlyCosmos" id="Q54K09">
    <property type="glycosylation" value="15 sites, No reported glycans"/>
</dbReference>
<dbReference type="GlyGen" id="Q54K09">
    <property type="glycosylation" value="15 sites"/>
</dbReference>
<dbReference type="dictyBase" id="DDB_G0287905">
    <property type="gene designation" value="grlQ"/>
</dbReference>
<dbReference type="VEuPathDB" id="AmoebaDB:DDB_G0291095"/>
<dbReference type="InParanoid" id="Q54K09"/>
<dbReference type="OMA" id="PGTFYES"/>
<dbReference type="PhylomeDB" id="Q54K09"/>
<dbReference type="Reactome" id="R-DDI-418594">
    <property type="pathway name" value="G alpha (i) signalling events"/>
</dbReference>
<dbReference type="Reactome" id="R-DDI-420499">
    <property type="pathway name" value="Class C/3 (Metabotropic glutamate/pheromone receptors)"/>
</dbReference>
<dbReference type="Reactome" id="R-DDI-977444">
    <property type="pathway name" value="GABA B receptor activation"/>
</dbReference>
<dbReference type="PRO" id="PR:Q54K09"/>
<dbReference type="Proteomes" id="UP000002195">
    <property type="component" value="Chromosome 5"/>
</dbReference>
<dbReference type="GO" id="GO:0038039">
    <property type="term" value="C:G protein-coupled receptor heterodimeric complex"/>
    <property type="evidence" value="ECO:0000318"/>
    <property type="project" value="GO_Central"/>
</dbReference>
<dbReference type="GO" id="GO:0004965">
    <property type="term" value="F:G protein-coupled GABA receptor activity"/>
    <property type="evidence" value="ECO:0000318"/>
    <property type="project" value="GO_Central"/>
</dbReference>
<dbReference type="GO" id="GO:0007214">
    <property type="term" value="P:gamma-aminobutyric acid signaling pathway"/>
    <property type="evidence" value="ECO:0000318"/>
    <property type="project" value="GO_Central"/>
</dbReference>
<dbReference type="CDD" id="cd15047">
    <property type="entry name" value="7tmC_GABA-B-like"/>
    <property type="match status" value="1"/>
</dbReference>
<dbReference type="Gene3D" id="2.160.20.10">
    <property type="entry name" value="Single-stranded right-handed beta-helix, Pectin lyase-like"/>
    <property type="match status" value="1"/>
</dbReference>
<dbReference type="InterPro" id="IPR039448">
    <property type="entry name" value="Beta_helix"/>
</dbReference>
<dbReference type="InterPro" id="IPR002455">
    <property type="entry name" value="GPCR3_GABA-B"/>
</dbReference>
<dbReference type="InterPro" id="IPR017978">
    <property type="entry name" value="GPCR_3_C"/>
</dbReference>
<dbReference type="InterPro" id="IPR012334">
    <property type="entry name" value="Pectin_lyas_fold"/>
</dbReference>
<dbReference type="InterPro" id="IPR011050">
    <property type="entry name" value="Pectin_lyase_fold/virulence"/>
</dbReference>
<dbReference type="PANTHER" id="PTHR10519">
    <property type="entry name" value="GABA-B RECEPTOR"/>
    <property type="match status" value="1"/>
</dbReference>
<dbReference type="PANTHER" id="PTHR10519:SF68">
    <property type="entry name" value="METABOTROPIC GLUTAMATE RECEPTOR-LIKE PROTEIN Q"/>
    <property type="match status" value="1"/>
</dbReference>
<dbReference type="Pfam" id="PF00003">
    <property type="entry name" value="7tm_3"/>
    <property type="match status" value="1"/>
</dbReference>
<dbReference type="Pfam" id="PF13229">
    <property type="entry name" value="Beta_helix"/>
    <property type="match status" value="1"/>
</dbReference>
<dbReference type="SUPFAM" id="SSF51126">
    <property type="entry name" value="Pectin lyase-like"/>
    <property type="match status" value="1"/>
</dbReference>
<dbReference type="PROSITE" id="PS50259">
    <property type="entry name" value="G_PROTEIN_RECEP_F3_4"/>
    <property type="match status" value="1"/>
</dbReference>
<protein>
    <recommendedName>
        <fullName>Metabotropic glutamate receptor-like protein Q</fullName>
    </recommendedName>
</protein>
<comment type="subcellular location">
    <subcellularLocation>
        <location evidence="5">Membrane</location>
        <topology evidence="5">Multi-pass membrane protein</topology>
    </subcellularLocation>
</comment>
<comment type="developmental stage">
    <text evidence="3">Increasingly expressed from early aggregation.</text>
</comment>
<comment type="induction">
    <text evidence="4">Up-regulated by P.aeruginosa, PAO1 strain and PA14 strain infection.</text>
</comment>
<comment type="similarity">
    <text evidence="5">Belongs to the G-protein coupled receptor 3 family. GABA-B receptor subfamily.</text>
</comment>
<evidence type="ECO:0000255" key="1"/>
<evidence type="ECO:0000256" key="2">
    <source>
        <dbReference type="SAM" id="MobiDB-lite"/>
    </source>
</evidence>
<evidence type="ECO:0000269" key="3">
    <source>
    </source>
</evidence>
<evidence type="ECO:0000269" key="4">
    <source>
    </source>
</evidence>
<evidence type="ECO:0000305" key="5"/>
<accession>Q54K09</accession>
<sequence length="1187" mass="134886">MRLFFKFFYLSNEGFDNELCGNFKSPCKNIGYLFNNSRVDKNFNSTFYFSPGIYNLSSSIIIIDFQVGINLIGIGENKKIIITTHKGTRGVISYNSNLIIRGITFDNCKVKKNEFPLYVPETLTDYSDDKLDYLTLNYYIGTGGALQIVYSKVYISNCVFSNNKGRNGGAIFTVLSNITISDCIFYSNQALMRSEDGGNGGAIFFGLSTNAIILKSIFKNNMAITGGVIVQSNSELRVEDTVFAYNQASNGGVFLIFNDSKIESTRCSFYANYANISAIANIQNSFAFQKSCLYQENMASAMGGVFSLVDRTILFVTLSIFNDNYAPSSLIVENHGSGLAMFTNCEFTFSDNFKRQIIQSLFSISNYNFLLLKDSRVSNSKGNVIWCTSNAIIVVYNTTFYNVSSKVINIHSQGYFFSISTTFIECKAEDYLVVLRNGARGILFRNNFIDNNGILMVFTTYNSSMIIIESKFFNNIVRNELIAVRNEYTLQIYNSIFKNNIGKTRGCIISVDQLGKLTSTNNYFINNTSVYGTIINFVKKRFNYWHTDFQCFSTFKNDTIVNNTALVSGAIVYYRDKIIGTKYTCESCLFLNNIAHFGNNINSGFHSFSVIQASKVHSNEHFPALIYAFDQFDNLIRGKNDIRFHVSSCDDIHLTGVTSSTIQLNGVTALYNLKVNSPENHFCNLSYKSNPKKGDVKLPISILNCPQGEEMFDVSYQGKVFQCLKTIETSNIAKTVMIITTSILVLLILLCFGITIAYSKEKVINFGNIVFLILMLFSCLFLCIIIYVSIEPTNFSCQFSAIVFPIGIGILFTLTLLKQYKIYKLFKYSDFLKINTDNLKMVKYAGLIMVPVFLLVLIGVIVYPSKPTFILDLHTKTATKYCISRKYYVFSIVIVVYEVIILLTSCFIAMKSKRYHSTPGTFYESLFNSILIYNYTLVFIVLIPLFYTLQNNPTTIYLIYSIGSSILVFATLSIIFIPKINFLFRRKQIVSTLKKTIETQERDIQRNKDLLIFYKMFLIEKKNNNFNNNPIFNIHETFSSEDEDEDEEDDIGEGIYSLFNHWDQNKRKYNNNQIYPNQIPKQTTNSPSSQSIDFLNNPTIPKNKSINNLPNLFKKPKKKLKSKIISKSANSSPNINNNTINNNNNNNNNNNNNNNNNNNNNNINNNNNNNININTKRRKSMDPSLDS</sequence>
<gene>
    <name type="primary">grlQ</name>
    <name type="ORF">DDB_G0287905</name>
</gene>
<reference key="1">
    <citation type="journal article" date="2005" name="Nature">
        <title>The genome of the social amoeba Dictyostelium discoideum.</title>
        <authorList>
            <person name="Eichinger L."/>
            <person name="Pachebat J.A."/>
            <person name="Gloeckner G."/>
            <person name="Rajandream M.A."/>
            <person name="Sucgang R."/>
            <person name="Berriman M."/>
            <person name="Song J."/>
            <person name="Olsen R."/>
            <person name="Szafranski K."/>
            <person name="Xu Q."/>
            <person name="Tunggal B."/>
            <person name="Kummerfeld S."/>
            <person name="Madera M."/>
            <person name="Konfortov B.A."/>
            <person name="Rivero F."/>
            <person name="Bankier A.T."/>
            <person name="Lehmann R."/>
            <person name="Hamlin N."/>
            <person name="Davies R."/>
            <person name="Gaudet P."/>
            <person name="Fey P."/>
            <person name="Pilcher K."/>
            <person name="Chen G."/>
            <person name="Saunders D."/>
            <person name="Sodergren E.J."/>
            <person name="Davis P."/>
            <person name="Kerhornou A."/>
            <person name="Nie X."/>
            <person name="Hall N."/>
            <person name="Anjard C."/>
            <person name="Hemphill L."/>
            <person name="Bason N."/>
            <person name="Farbrother P."/>
            <person name="Desany B."/>
            <person name="Just E."/>
            <person name="Morio T."/>
            <person name="Rost R."/>
            <person name="Churcher C.M."/>
            <person name="Cooper J."/>
            <person name="Haydock S."/>
            <person name="van Driessche N."/>
            <person name="Cronin A."/>
            <person name="Goodhead I."/>
            <person name="Muzny D.M."/>
            <person name="Mourier T."/>
            <person name="Pain A."/>
            <person name="Lu M."/>
            <person name="Harper D."/>
            <person name="Lindsay R."/>
            <person name="Hauser H."/>
            <person name="James K.D."/>
            <person name="Quiles M."/>
            <person name="Madan Babu M."/>
            <person name="Saito T."/>
            <person name="Buchrieser C."/>
            <person name="Wardroper A."/>
            <person name="Felder M."/>
            <person name="Thangavelu M."/>
            <person name="Johnson D."/>
            <person name="Knights A."/>
            <person name="Loulseged H."/>
            <person name="Mungall K.L."/>
            <person name="Oliver K."/>
            <person name="Price C."/>
            <person name="Quail M.A."/>
            <person name="Urushihara H."/>
            <person name="Hernandez J."/>
            <person name="Rabbinowitsch E."/>
            <person name="Steffen D."/>
            <person name="Sanders M."/>
            <person name="Ma J."/>
            <person name="Kohara Y."/>
            <person name="Sharp S."/>
            <person name="Simmonds M.N."/>
            <person name="Spiegler S."/>
            <person name="Tivey A."/>
            <person name="Sugano S."/>
            <person name="White B."/>
            <person name="Walker D."/>
            <person name="Woodward J.R."/>
            <person name="Winckler T."/>
            <person name="Tanaka Y."/>
            <person name="Shaulsky G."/>
            <person name="Schleicher M."/>
            <person name="Weinstock G.M."/>
            <person name="Rosenthal A."/>
            <person name="Cox E.C."/>
            <person name="Chisholm R.L."/>
            <person name="Gibbs R.A."/>
            <person name="Loomis W.F."/>
            <person name="Platzer M."/>
            <person name="Kay R.R."/>
            <person name="Williams J.G."/>
            <person name="Dear P.H."/>
            <person name="Noegel A.A."/>
            <person name="Barrell B.G."/>
            <person name="Kuspa A."/>
        </authorList>
    </citation>
    <scope>NUCLEOTIDE SEQUENCE [LARGE SCALE GENOMIC DNA]</scope>
    <source>
        <strain>AX4</strain>
    </source>
</reference>
<reference key="2">
    <citation type="journal article" date="2006" name="Eur. J. Cell Biol.">
        <title>The Dictyostelium repertoire of seven transmembrane domain receptors.</title>
        <authorList>
            <person name="Prabhu Y."/>
            <person name="Eichinger L."/>
        </authorList>
    </citation>
    <scope>NOMENCLATURE</scope>
</reference>
<reference key="3">
    <citation type="journal article" date="2007" name="BMC Dev. Biol.">
        <title>GrlJ, a Dictyostelium GABAB-like receptor with roles in post-aggregation development.</title>
        <authorList>
            <person name="Prabhu Y."/>
            <person name="Mueller R."/>
            <person name="Anjard C."/>
            <person name="Noegel A.A."/>
        </authorList>
    </citation>
    <scope>DEVELOPMENTAL STAGE</scope>
</reference>
<reference key="4">
    <citation type="journal article" date="2008" name="BMC Microbiol.">
        <title>Dictyostelium transcriptional responses to Pseudomonas aeruginosa: common and specific effects from PAO1 and PA14 strains.</title>
        <authorList>
            <person name="Carilla-Latorre S."/>
            <person name="Calvo-Garrido J."/>
            <person name="Bloomfield G."/>
            <person name="Skelton J."/>
            <person name="Kay R.R."/>
            <person name="Ivens A."/>
            <person name="Martinez J.L."/>
            <person name="Escalante R."/>
        </authorList>
    </citation>
    <scope>INDUCTION [LARGE SCALE ANALYSIS]</scope>
</reference>